<feature type="chain" id="PRO_1000052071" description="Large ribosomal subunit protein uL3">
    <location>
        <begin position="1"/>
        <end position="206"/>
    </location>
</feature>
<feature type="region of interest" description="Disordered" evidence="2">
    <location>
        <begin position="122"/>
        <end position="154"/>
    </location>
</feature>
<dbReference type="EMBL" id="CP000350">
    <property type="protein sequence ID" value="ABJ77082.1"/>
    <property type="molecule type" value="Genomic_DNA"/>
</dbReference>
<dbReference type="RefSeq" id="WP_002722901.1">
    <property type="nucleotide sequence ID" value="NC_008510.1"/>
</dbReference>
<dbReference type="SMR" id="Q04PT8"/>
<dbReference type="GeneID" id="61172950"/>
<dbReference type="KEGG" id="lbj:LBJ_2659"/>
<dbReference type="HOGENOM" id="CLU_044142_4_1_12"/>
<dbReference type="Proteomes" id="UP000000656">
    <property type="component" value="Chromosome 1"/>
</dbReference>
<dbReference type="GO" id="GO:0022625">
    <property type="term" value="C:cytosolic large ribosomal subunit"/>
    <property type="evidence" value="ECO:0007669"/>
    <property type="project" value="TreeGrafter"/>
</dbReference>
<dbReference type="GO" id="GO:0019843">
    <property type="term" value="F:rRNA binding"/>
    <property type="evidence" value="ECO:0007669"/>
    <property type="project" value="UniProtKB-UniRule"/>
</dbReference>
<dbReference type="GO" id="GO:0003735">
    <property type="term" value="F:structural constituent of ribosome"/>
    <property type="evidence" value="ECO:0007669"/>
    <property type="project" value="InterPro"/>
</dbReference>
<dbReference type="GO" id="GO:0006412">
    <property type="term" value="P:translation"/>
    <property type="evidence" value="ECO:0007669"/>
    <property type="project" value="UniProtKB-UniRule"/>
</dbReference>
<dbReference type="FunFam" id="2.40.30.10:FF:000004">
    <property type="entry name" value="50S ribosomal protein L3"/>
    <property type="match status" value="1"/>
</dbReference>
<dbReference type="Gene3D" id="3.30.160.810">
    <property type="match status" value="1"/>
</dbReference>
<dbReference type="Gene3D" id="2.40.30.10">
    <property type="entry name" value="Translation factors"/>
    <property type="match status" value="1"/>
</dbReference>
<dbReference type="HAMAP" id="MF_01325_B">
    <property type="entry name" value="Ribosomal_uL3_B"/>
    <property type="match status" value="1"/>
</dbReference>
<dbReference type="InterPro" id="IPR000597">
    <property type="entry name" value="Ribosomal_uL3"/>
</dbReference>
<dbReference type="InterPro" id="IPR019927">
    <property type="entry name" value="Ribosomal_uL3_bac/org-type"/>
</dbReference>
<dbReference type="InterPro" id="IPR009000">
    <property type="entry name" value="Transl_B-barrel_sf"/>
</dbReference>
<dbReference type="NCBIfam" id="TIGR03625">
    <property type="entry name" value="L3_bact"/>
    <property type="match status" value="1"/>
</dbReference>
<dbReference type="PANTHER" id="PTHR11229">
    <property type="entry name" value="50S RIBOSOMAL PROTEIN L3"/>
    <property type="match status" value="1"/>
</dbReference>
<dbReference type="PANTHER" id="PTHR11229:SF16">
    <property type="entry name" value="LARGE RIBOSOMAL SUBUNIT PROTEIN UL3C"/>
    <property type="match status" value="1"/>
</dbReference>
<dbReference type="Pfam" id="PF00297">
    <property type="entry name" value="Ribosomal_L3"/>
    <property type="match status" value="1"/>
</dbReference>
<dbReference type="SUPFAM" id="SSF50447">
    <property type="entry name" value="Translation proteins"/>
    <property type="match status" value="1"/>
</dbReference>
<reference key="1">
    <citation type="journal article" date="2006" name="Proc. Natl. Acad. Sci. U.S.A.">
        <title>Genome reduction in Leptospira borgpetersenii reflects limited transmission potential.</title>
        <authorList>
            <person name="Bulach D.M."/>
            <person name="Zuerner R.L."/>
            <person name="Wilson P."/>
            <person name="Seemann T."/>
            <person name="McGrath A."/>
            <person name="Cullen P.A."/>
            <person name="Davis J."/>
            <person name="Johnson M."/>
            <person name="Kuczek E."/>
            <person name="Alt D.P."/>
            <person name="Peterson-Burch B."/>
            <person name="Coppel R.L."/>
            <person name="Rood J.I."/>
            <person name="Davies J.K."/>
            <person name="Adler B."/>
        </authorList>
    </citation>
    <scope>NUCLEOTIDE SEQUENCE [LARGE SCALE GENOMIC DNA]</scope>
    <source>
        <strain>JB197</strain>
    </source>
</reference>
<protein>
    <recommendedName>
        <fullName evidence="1">Large ribosomal subunit protein uL3</fullName>
    </recommendedName>
    <alternativeName>
        <fullName evidence="3">50S ribosomal protein L3</fullName>
    </alternativeName>
</protein>
<keyword id="KW-0687">Ribonucleoprotein</keyword>
<keyword id="KW-0689">Ribosomal protein</keyword>
<keyword id="KW-0694">RNA-binding</keyword>
<keyword id="KW-0699">rRNA-binding</keyword>
<organism>
    <name type="scientific">Leptospira borgpetersenii serovar Hardjo-bovis (strain JB197)</name>
    <dbReference type="NCBI Taxonomy" id="355277"/>
    <lineage>
        <taxon>Bacteria</taxon>
        <taxon>Pseudomonadati</taxon>
        <taxon>Spirochaetota</taxon>
        <taxon>Spirochaetia</taxon>
        <taxon>Leptospirales</taxon>
        <taxon>Leptospiraceae</taxon>
        <taxon>Leptospira</taxon>
    </lineage>
</organism>
<sequence>MAKGLIGKKVGMSQIFDEQGNIIPVTVLEVGPCAVSQVKSVENDGYEAIQLAFQDTKEFQISKAEKNHLAKASLGPKKVLREFRSFGDSPATGSVLKVQDIFAVSDVVKVTGVSKGRGFQGVVKRHGHAGGPGGHGSRFHRHPGSMGANSTPSRVFKGVKLPGRTGSQQTTVRNLKVVRINEEKNLVFVSGAVPGTTNTVITIEKI</sequence>
<accession>Q04PT8</accession>
<name>RL3_LEPBJ</name>
<comment type="function">
    <text evidence="1">One of the primary rRNA binding proteins, it binds directly near the 3'-end of the 23S rRNA, where it nucleates assembly of the 50S subunit.</text>
</comment>
<comment type="subunit">
    <text evidence="1">Part of the 50S ribosomal subunit. Forms a cluster with proteins L14 and L19.</text>
</comment>
<comment type="similarity">
    <text evidence="1">Belongs to the universal ribosomal protein uL3 family.</text>
</comment>
<evidence type="ECO:0000255" key="1">
    <source>
        <dbReference type="HAMAP-Rule" id="MF_01325"/>
    </source>
</evidence>
<evidence type="ECO:0000256" key="2">
    <source>
        <dbReference type="SAM" id="MobiDB-lite"/>
    </source>
</evidence>
<evidence type="ECO:0000305" key="3"/>
<gene>
    <name evidence="1" type="primary">rplC</name>
    <name type="ordered locus">LBJ_2659</name>
</gene>
<proteinExistence type="inferred from homology"/>